<dbReference type="EMBL" id="AAFI02000111">
    <property type="protein sequence ID" value="EAS66841.1"/>
    <property type="molecule type" value="Genomic_DNA"/>
</dbReference>
<dbReference type="RefSeq" id="XP_001134524.1">
    <property type="nucleotide sequence ID" value="XM_001134524.1"/>
</dbReference>
<dbReference type="SMR" id="Q1ZXD5"/>
<dbReference type="FunCoup" id="Q1ZXD5">
    <property type="interactions" value="740"/>
</dbReference>
<dbReference type="STRING" id="44689.Q1ZXD5"/>
<dbReference type="PaxDb" id="44689-DDB0233384"/>
<dbReference type="EnsemblProtists" id="EAS66841">
    <property type="protein sequence ID" value="EAS66841"/>
    <property type="gene ID" value="DDB_G0288479"/>
</dbReference>
<dbReference type="GeneID" id="8626646"/>
<dbReference type="KEGG" id="ddi:DDB_G0288479"/>
<dbReference type="dictyBase" id="DDB_G0288479">
    <property type="gene designation" value="lsm8"/>
</dbReference>
<dbReference type="VEuPathDB" id="AmoebaDB:DDB_G0288479"/>
<dbReference type="eggNOG" id="KOG1784">
    <property type="taxonomic scope" value="Eukaryota"/>
</dbReference>
<dbReference type="HOGENOM" id="CLU_076902_8_1_1"/>
<dbReference type="InParanoid" id="Q1ZXD5"/>
<dbReference type="OMA" id="AACDQTT"/>
<dbReference type="PhylomeDB" id="Q1ZXD5"/>
<dbReference type="PRO" id="PR:Q1ZXD5"/>
<dbReference type="Proteomes" id="UP000002195">
    <property type="component" value="Chromosome 5"/>
</dbReference>
<dbReference type="GO" id="GO:0005730">
    <property type="term" value="C:nucleolus"/>
    <property type="evidence" value="ECO:0000250"/>
    <property type="project" value="dictyBase"/>
</dbReference>
<dbReference type="GO" id="GO:0071011">
    <property type="term" value="C:precatalytic spliceosome"/>
    <property type="evidence" value="ECO:0000318"/>
    <property type="project" value="GO_Central"/>
</dbReference>
<dbReference type="GO" id="GO:0046540">
    <property type="term" value="C:U4/U6 x U5 tri-snRNP complex"/>
    <property type="evidence" value="ECO:0000250"/>
    <property type="project" value="dictyBase"/>
</dbReference>
<dbReference type="GO" id="GO:0005688">
    <property type="term" value="C:U6 snRNP"/>
    <property type="evidence" value="ECO:0000250"/>
    <property type="project" value="dictyBase"/>
</dbReference>
<dbReference type="GO" id="GO:0003729">
    <property type="term" value="F:mRNA binding"/>
    <property type="evidence" value="ECO:0000318"/>
    <property type="project" value="GO_Central"/>
</dbReference>
<dbReference type="GO" id="GO:0003723">
    <property type="term" value="F:RNA binding"/>
    <property type="evidence" value="ECO:0000250"/>
    <property type="project" value="dictyBase"/>
</dbReference>
<dbReference type="GO" id="GO:0000398">
    <property type="term" value="P:mRNA splicing, via spliceosome"/>
    <property type="evidence" value="ECO:0000250"/>
    <property type="project" value="dictyBase"/>
</dbReference>
<dbReference type="CDD" id="cd01727">
    <property type="entry name" value="LSm8"/>
    <property type="match status" value="1"/>
</dbReference>
<dbReference type="FunFam" id="2.30.30.100:FF:000027">
    <property type="entry name" value="U6 snRNA-associated Sm-like protein LSm8"/>
    <property type="match status" value="1"/>
</dbReference>
<dbReference type="Gene3D" id="2.30.30.100">
    <property type="match status" value="1"/>
</dbReference>
<dbReference type="InterPro" id="IPR034103">
    <property type="entry name" value="Lsm8"/>
</dbReference>
<dbReference type="InterPro" id="IPR010920">
    <property type="entry name" value="LSM_dom_sf"/>
</dbReference>
<dbReference type="InterPro" id="IPR044642">
    <property type="entry name" value="PTHR15588"/>
</dbReference>
<dbReference type="InterPro" id="IPR047575">
    <property type="entry name" value="Sm"/>
</dbReference>
<dbReference type="InterPro" id="IPR001163">
    <property type="entry name" value="Sm_dom_euk/arc"/>
</dbReference>
<dbReference type="PANTHER" id="PTHR15588">
    <property type="entry name" value="LSM1"/>
    <property type="match status" value="1"/>
</dbReference>
<dbReference type="PANTHER" id="PTHR15588:SF9">
    <property type="entry name" value="U6 SNRNA-ASSOCIATED SM-LIKE PROTEIN LSM8"/>
    <property type="match status" value="1"/>
</dbReference>
<dbReference type="Pfam" id="PF01423">
    <property type="entry name" value="LSM"/>
    <property type="match status" value="1"/>
</dbReference>
<dbReference type="SMART" id="SM00651">
    <property type="entry name" value="Sm"/>
    <property type="match status" value="1"/>
</dbReference>
<dbReference type="SUPFAM" id="SSF50182">
    <property type="entry name" value="Sm-like ribonucleoproteins"/>
    <property type="match status" value="1"/>
</dbReference>
<dbReference type="PROSITE" id="PS52002">
    <property type="entry name" value="SM"/>
    <property type="match status" value="1"/>
</dbReference>
<organism>
    <name type="scientific">Dictyostelium discoideum</name>
    <name type="common">Social amoeba</name>
    <dbReference type="NCBI Taxonomy" id="44689"/>
    <lineage>
        <taxon>Eukaryota</taxon>
        <taxon>Amoebozoa</taxon>
        <taxon>Evosea</taxon>
        <taxon>Eumycetozoa</taxon>
        <taxon>Dictyostelia</taxon>
        <taxon>Dictyosteliales</taxon>
        <taxon>Dictyosteliaceae</taxon>
        <taxon>Dictyostelium</taxon>
    </lineage>
</organism>
<gene>
    <name type="primary">lsm8</name>
    <name type="ORF">DDB_G0288479</name>
</gene>
<sequence>MAMLESYLKKQVLVLTADGRSIIGTLRGIDQTINVVLEKCHERVYSDEGIEVIPLGVHLIKGDDVAVIGEVDDELDKKLNLKEIIAEPMKPIVH</sequence>
<feature type="chain" id="PRO_0000327626" description="Probable U6 snRNA-associated Sm-like protein LSm8">
    <location>
        <begin position="1"/>
        <end position="94"/>
    </location>
</feature>
<feature type="domain" description="Sm" evidence="2">
    <location>
        <begin position="1"/>
        <end position="74"/>
    </location>
</feature>
<proteinExistence type="inferred from homology"/>
<accession>Q1ZXD5</accession>
<evidence type="ECO:0000250" key="1">
    <source>
        <dbReference type="UniProtKB" id="O95777"/>
    </source>
</evidence>
<evidence type="ECO:0000255" key="2">
    <source>
        <dbReference type="PROSITE-ProRule" id="PRU01346"/>
    </source>
</evidence>
<evidence type="ECO:0000305" key="3"/>
<comment type="function">
    <text evidence="1">Plays a role in pre-mRNA splicing as component of the U4/U6-U5 tri-snRNP complex that is involved in spliceosome assembly, and as component of the precatalytic spliceosome (spliceosome B complex). The heptameric LSM2-8 complex binds specifically to the 3'-terminal U-tract of U6 snRNA.</text>
</comment>
<comment type="subunit">
    <text evidence="1">Component of the precatalytic spliceosome (spliceosome B complex). Component of the U4/U6-U5 tri-snRNP complex, a building block of the precatalytic spliceosome (spliceosome B complex). LSM2, LSM3, LSM4, LSM5, LSM6, LSM7 and LSM8 form a heptameric, ring-shaped subcomplex (the LSM2-8 complex) that is part of the U4/U6-U5 tri-snRNP complex and the precatalytic spliceosome.</text>
</comment>
<comment type="subcellular location">
    <subcellularLocation>
        <location evidence="1">Nucleus</location>
    </subcellularLocation>
</comment>
<comment type="similarity">
    <text evidence="3">Belongs to the snRNP Sm proteins family.</text>
</comment>
<protein>
    <recommendedName>
        <fullName>Probable U6 snRNA-associated Sm-like protein LSm8</fullName>
    </recommendedName>
</protein>
<keyword id="KW-0507">mRNA processing</keyword>
<keyword id="KW-0508">mRNA splicing</keyword>
<keyword id="KW-0539">Nucleus</keyword>
<keyword id="KW-1185">Reference proteome</keyword>
<keyword id="KW-0687">Ribonucleoprotein</keyword>
<keyword id="KW-0694">RNA-binding</keyword>
<keyword id="KW-0747">Spliceosome</keyword>
<reference key="1">
    <citation type="journal article" date="2005" name="Nature">
        <title>The genome of the social amoeba Dictyostelium discoideum.</title>
        <authorList>
            <person name="Eichinger L."/>
            <person name="Pachebat J.A."/>
            <person name="Gloeckner G."/>
            <person name="Rajandream M.A."/>
            <person name="Sucgang R."/>
            <person name="Berriman M."/>
            <person name="Song J."/>
            <person name="Olsen R."/>
            <person name="Szafranski K."/>
            <person name="Xu Q."/>
            <person name="Tunggal B."/>
            <person name="Kummerfeld S."/>
            <person name="Madera M."/>
            <person name="Konfortov B.A."/>
            <person name="Rivero F."/>
            <person name="Bankier A.T."/>
            <person name="Lehmann R."/>
            <person name="Hamlin N."/>
            <person name="Davies R."/>
            <person name="Gaudet P."/>
            <person name="Fey P."/>
            <person name="Pilcher K."/>
            <person name="Chen G."/>
            <person name="Saunders D."/>
            <person name="Sodergren E.J."/>
            <person name="Davis P."/>
            <person name="Kerhornou A."/>
            <person name="Nie X."/>
            <person name="Hall N."/>
            <person name="Anjard C."/>
            <person name="Hemphill L."/>
            <person name="Bason N."/>
            <person name="Farbrother P."/>
            <person name="Desany B."/>
            <person name="Just E."/>
            <person name="Morio T."/>
            <person name="Rost R."/>
            <person name="Churcher C.M."/>
            <person name="Cooper J."/>
            <person name="Haydock S."/>
            <person name="van Driessche N."/>
            <person name="Cronin A."/>
            <person name="Goodhead I."/>
            <person name="Muzny D.M."/>
            <person name="Mourier T."/>
            <person name="Pain A."/>
            <person name="Lu M."/>
            <person name="Harper D."/>
            <person name="Lindsay R."/>
            <person name="Hauser H."/>
            <person name="James K.D."/>
            <person name="Quiles M."/>
            <person name="Madan Babu M."/>
            <person name="Saito T."/>
            <person name="Buchrieser C."/>
            <person name="Wardroper A."/>
            <person name="Felder M."/>
            <person name="Thangavelu M."/>
            <person name="Johnson D."/>
            <person name="Knights A."/>
            <person name="Loulseged H."/>
            <person name="Mungall K.L."/>
            <person name="Oliver K."/>
            <person name="Price C."/>
            <person name="Quail M.A."/>
            <person name="Urushihara H."/>
            <person name="Hernandez J."/>
            <person name="Rabbinowitsch E."/>
            <person name="Steffen D."/>
            <person name="Sanders M."/>
            <person name="Ma J."/>
            <person name="Kohara Y."/>
            <person name="Sharp S."/>
            <person name="Simmonds M.N."/>
            <person name="Spiegler S."/>
            <person name="Tivey A."/>
            <person name="Sugano S."/>
            <person name="White B."/>
            <person name="Walker D."/>
            <person name="Woodward J.R."/>
            <person name="Winckler T."/>
            <person name="Tanaka Y."/>
            <person name="Shaulsky G."/>
            <person name="Schleicher M."/>
            <person name="Weinstock G.M."/>
            <person name="Rosenthal A."/>
            <person name="Cox E.C."/>
            <person name="Chisholm R.L."/>
            <person name="Gibbs R.A."/>
            <person name="Loomis W.F."/>
            <person name="Platzer M."/>
            <person name="Kay R.R."/>
            <person name="Williams J.G."/>
            <person name="Dear P.H."/>
            <person name="Noegel A.A."/>
            <person name="Barrell B.G."/>
            <person name="Kuspa A."/>
        </authorList>
    </citation>
    <scope>NUCLEOTIDE SEQUENCE [LARGE SCALE GENOMIC DNA]</scope>
    <source>
        <strain>AX4</strain>
    </source>
</reference>
<name>LSM8_DICDI</name>